<organism>
    <name type="scientific">Plasmodium falciparum (isolate HB3)</name>
    <dbReference type="NCBI Taxonomy" id="137071"/>
    <lineage>
        <taxon>Eukaryota</taxon>
        <taxon>Sar</taxon>
        <taxon>Alveolata</taxon>
        <taxon>Apicomplexa</taxon>
        <taxon>Aconoidasida</taxon>
        <taxon>Haemosporida</taxon>
        <taxon>Plasmodiidae</taxon>
        <taxon>Plasmodium</taxon>
        <taxon>Plasmodium (Laverania)</taxon>
    </lineage>
</organism>
<proteinExistence type="evidence at protein level"/>
<keyword id="KW-0933">Apicoplast</keyword>
<keyword id="KW-0414">Isoprene biosynthesis</keyword>
<keyword id="KW-0456">Lyase</keyword>
<keyword id="KW-0479">Metal-binding</keyword>
<keyword id="KW-0934">Plastid</keyword>
<keyword id="KW-1185">Reference proteome</keyword>
<keyword id="KW-0809">Transit peptide</keyword>
<reference key="1">
    <citation type="journal article" date="2001" name="Eur. J. Biochem.">
        <title>Biosynthesis of terpenoids. 2C-methyl-D-erythritol 2,4-cyclodiphosphate synthase (IspF) from Plasmodium falciparum.</title>
        <authorList>
            <person name="Rohdich F."/>
            <person name="Eisenreich W."/>
            <person name="Wungsintaweekul J."/>
            <person name="Hecht S."/>
            <person name="Schuhr C.A."/>
            <person name="Bacher A."/>
        </authorList>
    </citation>
    <scope>NUCLEOTIDE SEQUENCE [MRNA]</scope>
    <scope>FUNCTION</scope>
    <scope>CATALYTIC ACTIVITY</scope>
    <scope>COFACTOR</scope>
    <scope>BIOPHYSICOCHEMICAL PROPERTIES</scope>
    <scope>PATHWAY</scope>
</reference>
<reference evidence="8" key="2">
    <citation type="submission" date="2006-03" db="EMBL/GenBank/DDBJ databases">
        <title>Annotation of Plasmodium falciparum HB3.</title>
        <authorList>
            <consortium name="The Broad Institute Genome Sequencing Platform"/>
            <person name="Volkman S.K."/>
            <person name="Neafsey D.E."/>
            <person name="Dash A.P."/>
            <person name="Chitnis C.E."/>
            <person name="Hartl D.L."/>
            <person name="Young S.K."/>
            <person name="Zeng Q."/>
            <person name="Koehrsen M."/>
            <person name="Alvarado L."/>
            <person name="Berlin A."/>
            <person name="Borenstein D."/>
            <person name="Chapman S.B."/>
            <person name="Chen Z."/>
            <person name="Engels R."/>
            <person name="Freedman E."/>
            <person name="Gellesch M."/>
            <person name="Goldberg J."/>
            <person name="Griggs A."/>
            <person name="Gujja S."/>
            <person name="Heilman E.R."/>
            <person name="Heiman D.I."/>
            <person name="Howarth C."/>
            <person name="Jen D."/>
            <person name="Larson L."/>
            <person name="Mehta T."/>
            <person name="Neiman D."/>
            <person name="Park D."/>
            <person name="Pearson M."/>
            <person name="Roberts A."/>
            <person name="Saif S."/>
            <person name="Shea T."/>
            <person name="Shenoy N."/>
            <person name="Sisk P."/>
            <person name="Stolte C."/>
            <person name="Sykes S."/>
            <person name="Walk T."/>
            <person name="White J."/>
            <person name="Yandava C."/>
            <person name="Haas B."/>
            <person name="Henn M.R."/>
            <person name="Nusbaum C."/>
            <person name="Birren B."/>
        </authorList>
    </citation>
    <scope>NUCLEOTIDE SEQUENCE [LARGE SCALE GENOMIC DNA]</scope>
    <source>
        <strain evidence="7">HB3</strain>
    </source>
</reference>
<feature type="transit peptide" description="Apicoplast" evidence="5">
    <location>
        <begin position="1"/>
        <end status="unknown"/>
    </location>
</feature>
<feature type="chain" id="PRO_0000016485" description="2-C-methyl-D-erythritol 2,4-cyclodiphosphate synthase, apicoplast">
    <location>
        <begin status="unknown"/>
        <end position="240"/>
    </location>
</feature>
<feature type="binding site" evidence="2">
    <location>
        <begin position="71"/>
        <end position="73"/>
    </location>
    <ligand>
        <name>4-CDP-2-C-methyl-D-erythritol 2-phosphate</name>
        <dbReference type="ChEBI" id="CHEBI:57919"/>
    </ligand>
</feature>
<feature type="binding site" evidence="1">
    <location>
        <position position="71"/>
    </location>
    <ligand>
        <name>a divalent metal cation</name>
        <dbReference type="ChEBI" id="CHEBI:60240"/>
    </ligand>
</feature>
<feature type="binding site" evidence="1">
    <location>
        <position position="73"/>
    </location>
    <ligand>
        <name>a divalent metal cation</name>
        <dbReference type="ChEBI" id="CHEBI:60240"/>
    </ligand>
</feature>
<feature type="binding site" evidence="2">
    <location>
        <begin position="115"/>
        <end position="116"/>
    </location>
    <ligand>
        <name>4-CDP-2-C-methyl-D-erythritol 2-phosphate</name>
        <dbReference type="ChEBI" id="CHEBI:57919"/>
    </ligand>
</feature>
<feature type="binding site" evidence="1">
    <location>
        <position position="123"/>
    </location>
    <ligand>
        <name>a divalent metal cation</name>
        <dbReference type="ChEBI" id="CHEBI:60240"/>
    </ligand>
</feature>
<feature type="binding site" evidence="1">
    <location>
        <begin position="137"/>
        <end position="139"/>
    </location>
    <ligand>
        <name>4-CDP-2-C-methyl-D-erythritol 2-phosphate</name>
        <dbReference type="ChEBI" id="CHEBI:57919"/>
    </ligand>
</feature>
<feature type="binding site" evidence="2">
    <location>
        <begin position="142"/>
        <end position="146"/>
    </location>
    <ligand>
        <name>4-CDP-2-C-methyl-D-erythritol 2-phosphate</name>
        <dbReference type="ChEBI" id="CHEBI:57919"/>
    </ligand>
</feature>
<feature type="binding site" evidence="1">
    <location>
        <begin position="181"/>
        <end position="187"/>
    </location>
    <ligand>
        <name>4-CDP-2-C-methyl-D-erythritol 2-phosphate</name>
        <dbReference type="ChEBI" id="CHEBI:57919"/>
    </ligand>
</feature>
<feature type="binding site" evidence="1">
    <location>
        <begin position="212"/>
        <end position="214"/>
    </location>
    <ligand>
        <name>4-CDP-2-C-methyl-D-erythritol 2-phosphate</name>
        <dbReference type="ChEBI" id="CHEBI:57919"/>
    </ligand>
</feature>
<feature type="site" description="Transition state stabilizer" evidence="2">
    <location>
        <position position="115"/>
    </location>
</feature>
<feature type="site" description="Transition state stabilizer" evidence="2">
    <location>
        <position position="214"/>
    </location>
</feature>
<evidence type="ECO:0000250" key="1">
    <source>
        <dbReference type="UniProtKB" id="P62368"/>
    </source>
</evidence>
<evidence type="ECO:0000250" key="2">
    <source>
        <dbReference type="UniProtKB" id="P62617"/>
    </source>
</evidence>
<evidence type="ECO:0000269" key="3">
    <source>
    </source>
</evidence>
<evidence type="ECO:0000303" key="4">
    <source>
    </source>
</evidence>
<evidence type="ECO:0000305" key="5"/>
<evidence type="ECO:0000305" key="6">
    <source>
    </source>
</evidence>
<evidence type="ECO:0000312" key="7">
    <source>
        <dbReference type="EMBL" id="KOB59060.1"/>
    </source>
</evidence>
<evidence type="ECO:0000312" key="8">
    <source>
        <dbReference type="Proteomes" id="UP000054289"/>
    </source>
</evidence>
<comment type="function">
    <text evidence="3">In the mevalonate-independent isoprenoid biosynthetic pathway, converts 4-diphosphocytidyl-2C-methyl-D-erythritol 2-phosphate into 2C-methyl-D-erythritol 2,4-cyclodiphosphate and CMP.</text>
</comment>
<comment type="catalytic activity">
    <reaction evidence="3">
        <text>4-CDP-2-C-methyl-D-erythritol 2-phosphate = 2-C-methyl-D-erythritol 2,4-cyclic diphosphate + CMP</text>
        <dbReference type="Rhea" id="RHEA:23864"/>
        <dbReference type="ChEBI" id="CHEBI:57919"/>
        <dbReference type="ChEBI" id="CHEBI:58483"/>
        <dbReference type="ChEBI" id="CHEBI:60377"/>
        <dbReference type="EC" id="4.6.1.12"/>
    </reaction>
</comment>
<comment type="cofactor">
    <cofactor evidence="3">
        <name>a divalent metal cation</name>
        <dbReference type="ChEBI" id="CHEBI:60240"/>
    </cofactor>
    <text evidence="1">Binds 1 divalent metal cation per subunit.</text>
</comment>
<comment type="biophysicochemical properties">
    <kinetics>
        <KM evidence="3">252 uM for 4-CDP-2-C-methyl-D-erythritol 2-phosphate (at pH 7 and in presence of Mg(2+) with recombinant IspF residues (62-240))</KM>
        <Vmax evidence="3">4.3 umol/min/mg enzyme (at pH 7 and in presence of Mg(2+) with recombinant IspF residues (62-240))</Vmax>
    </kinetics>
</comment>
<comment type="pathway">
    <text evidence="6">Isoprenoid biosynthesis; isopentenyl diphosphate biosynthesis via DXP pathway; isopentenyl diphosphate from 1-deoxy-D-xylulose 5-phosphate: step 4/6.</text>
</comment>
<comment type="subunit">
    <text evidence="1">Homotrimer.</text>
</comment>
<comment type="subcellular location">
    <subcellularLocation>
        <location evidence="5">Plastid</location>
        <location evidence="5">Apicoplast</location>
    </subcellularLocation>
</comment>
<comment type="similarity">
    <text evidence="5">Belongs to the IspF family.</text>
</comment>
<protein>
    <recommendedName>
        <fullName evidence="4">2-C-methyl-D-erythritol 2,4-cyclodiphosphate synthase, apicoplast</fullName>
        <shortName evidence="5">MECDP-synthase</shortName>
        <shortName evidence="5">MECPS</shortName>
        <ecNumber evidence="3">4.6.1.12</ecNumber>
    </recommendedName>
</protein>
<sequence length="240" mass="27161">MFLKGYTSNVVLIILTFFILLTKEEKNIKNNISGYCFLNFGLKKNAIIKKREKQNLKLFCYNGIRIGQGYDIHKIKVLDEEYNTYANNDFNKNEQSFKTLTLGGVKINNVLVLSHSDGDIIYHSIVDSILGALGSLDIGTLFPDKDEKNKNKNSAIFLRYARLLIYKKNYDIGNVDINVIAQVPKISNIRKNIIKNISTVLNIDESQISVKGKTHEKLGVIGEKKAIECFANILLIPKNS</sequence>
<dbReference type="EC" id="4.6.1.12" evidence="3"/>
<dbReference type="EMBL" id="AF279661">
    <property type="protein sequence ID" value="AAG09818.1"/>
    <property type="molecule type" value="mRNA"/>
</dbReference>
<dbReference type="EMBL" id="CH671929">
    <property type="protein sequence ID" value="KOB59060.1"/>
    <property type="molecule type" value="Genomic_DNA"/>
</dbReference>
<dbReference type="SMR" id="P62369"/>
<dbReference type="EnsemblProtists" id="KOB59060">
    <property type="protein sequence ID" value="KOB59060"/>
    <property type="gene ID" value="PFHG_00813"/>
</dbReference>
<dbReference type="KEGG" id="pfh:PFHG_00813"/>
<dbReference type="VEuPathDB" id="PlasmoDB:PfHB3_020014000"/>
<dbReference type="OMA" id="ANKQNFK"/>
<dbReference type="OrthoDB" id="1534at418107"/>
<dbReference type="BRENDA" id="4.6.1.12">
    <property type="organism ID" value="4889"/>
</dbReference>
<dbReference type="SABIO-RK" id="P62369"/>
<dbReference type="UniPathway" id="UPA00056">
    <property type="reaction ID" value="UER00095"/>
</dbReference>
<dbReference type="Proteomes" id="UP000054289">
    <property type="component" value="Unassembled WGS sequence"/>
</dbReference>
<dbReference type="GO" id="GO:0020011">
    <property type="term" value="C:apicoplast"/>
    <property type="evidence" value="ECO:0007669"/>
    <property type="project" value="UniProtKB-SubCell"/>
</dbReference>
<dbReference type="GO" id="GO:0008685">
    <property type="term" value="F:2-C-methyl-D-erythritol 2,4-cyclodiphosphate synthase activity"/>
    <property type="evidence" value="ECO:0007669"/>
    <property type="project" value="UniProtKB-EC"/>
</dbReference>
<dbReference type="GO" id="GO:0046872">
    <property type="term" value="F:metal ion binding"/>
    <property type="evidence" value="ECO:0007669"/>
    <property type="project" value="UniProtKB-KW"/>
</dbReference>
<dbReference type="GO" id="GO:0019288">
    <property type="term" value="P:isopentenyl diphosphate biosynthetic process, methylerythritol 4-phosphate pathway"/>
    <property type="evidence" value="ECO:0007669"/>
    <property type="project" value="UniProtKB-UniPathway"/>
</dbReference>
<dbReference type="GO" id="GO:0016114">
    <property type="term" value="P:terpenoid biosynthetic process"/>
    <property type="evidence" value="ECO:0007669"/>
    <property type="project" value="InterPro"/>
</dbReference>
<dbReference type="CDD" id="cd00554">
    <property type="entry name" value="MECDP_synthase"/>
    <property type="match status" value="1"/>
</dbReference>
<dbReference type="FunFam" id="3.30.1330.50:FF:000004">
    <property type="entry name" value="2-C-methyl-D-erythritol 2,4-cyclodiphosphate synthase"/>
    <property type="match status" value="1"/>
</dbReference>
<dbReference type="Gene3D" id="3.30.1330.50">
    <property type="entry name" value="2-C-methyl-D-erythritol 2,4-cyclodiphosphate synthase"/>
    <property type="match status" value="1"/>
</dbReference>
<dbReference type="HAMAP" id="MF_00107">
    <property type="entry name" value="IspF"/>
    <property type="match status" value="1"/>
</dbReference>
<dbReference type="InterPro" id="IPR003526">
    <property type="entry name" value="MECDP_synthase"/>
</dbReference>
<dbReference type="InterPro" id="IPR020555">
    <property type="entry name" value="MECDP_synthase_CS"/>
</dbReference>
<dbReference type="InterPro" id="IPR036571">
    <property type="entry name" value="MECDP_synthase_sf"/>
</dbReference>
<dbReference type="NCBIfam" id="TIGR00151">
    <property type="entry name" value="ispF"/>
    <property type="match status" value="1"/>
</dbReference>
<dbReference type="PANTHER" id="PTHR43181">
    <property type="entry name" value="2-C-METHYL-D-ERYTHRITOL 2,4-CYCLODIPHOSPHATE SYNTHASE, CHLOROPLASTIC"/>
    <property type="match status" value="1"/>
</dbReference>
<dbReference type="PANTHER" id="PTHR43181:SF1">
    <property type="entry name" value="2-C-METHYL-D-ERYTHRITOL 2,4-CYCLODIPHOSPHATE SYNTHASE, CHLOROPLASTIC"/>
    <property type="match status" value="1"/>
</dbReference>
<dbReference type="Pfam" id="PF02542">
    <property type="entry name" value="YgbB"/>
    <property type="match status" value="1"/>
</dbReference>
<dbReference type="SUPFAM" id="SSF69765">
    <property type="entry name" value="IpsF-like"/>
    <property type="match status" value="1"/>
</dbReference>
<dbReference type="PROSITE" id="PS01350">
    <property type="entry name" value="ISPF"/>
    <property type="match status" value="1"/>
</dbReference>
<name>ISPF_PLAFX</name>
<accession>P62369</accession>
<accession>A0A0L7K7H5</accession>
<accession>O96178</accession>
<gene>
    <name evidence="4" type="primary">IspF</name>
    <name type="ORF">PFHG_00813</name>
</gene>